<feature type="chain" id="PRO_0000193099" description="Surfactin synthase subunit 1">
    <location>
        <begin position="1"/>
        <end position="3587"/>
    </location>
</feature>
<feature type="domain" description="Carrier 1" evidence="1">
    <location>
        <begin position="971"/>
        <end position="1046"/>
    </location>
</feature>
<feature type="domain" description="Carrier 2" evidence="1">
    <location>
        <begin position="2010"/>
        <end position="2085"/>
    </location>
</feature>
<feature type="domain" description="Carrier 3" evidence="1">
    <location>
        <begin position="3038"/>
        <end position="3112"/>
    </location>
</feature>
<feature type="region of interest" description="Domain 1 (glutamate-activating)">
    <location>
        <begin status="unknown"/>
        <end position="1047"/>
    </location>
</feature>
<feature type="region of interest" description="Domain 2 (leucine-activating)">
    <location>
        <begin status="unknown"/>
        <end position="2086"/>
    </location>
</feature>
<feature type="region of interest" description="Domain 3 (D-leucine-activating)">
    <location>
        <begin status="unknown"/>
        <end position="3114"/>
    </location>
</feature>
<feature type="modified residue" description="O-(pantetheine 4'-phosphoryl)serine" evidence="1 2">
    <location>
        <position position="1006"/>
    </location>
</feature>
<feature type="modified residue" description="O-(pantetheine 4'-phosphoryl)serine" evidence="1">
    <location>
        <position position="2045"/>
    </location>
</feature>
<feature type="modified residue" description="O-(pantetheine 4'-phosphoryl)serine" evidence="1">
    <location>
        <position position="3073"/>
    </location>
</feature>
<feature type="sequence conflict" description="In Ref. 2; CAA49816 and 3; BAA08982." evidence="3" ref="2 3">
    <original>I</original>
    <variation>M</variation>
    <location>
        <position position="146"/>
    </location>
</feature>
<feature type="sequence conflict" description="In Ref. 2; CAA49816 and 3; BAA08982." evidence="3" ref="2 3">
    <original>L</original>
    <variation>V</variation>
    <location>
        <position position="151"/>
    </location>
</feature>
<feature type="sequence conflict" description="In Ref. 1; BAA02522." evidence="3" ref="1">
    <original>G</original>
    <variation>A</variation>
    <location>
        <position position="165"/>
    </location>
</feature>
<feature type="sequence conflict" description="In Ref. 2; CAA49816 and 3; BAA08982." evidence="3" ref="2 3">
    <original>T</original>
    <variation>Q</variation>
    <location>
        <position position="281"/>
    </location>
</feature>
<feature type="sequence conflict" description="In Ref. 6; AAA22815." evidence="3" ref="6">
    <original>D</original>
    <variation>T</variation>
    <location>
        <position position="460"/>
    </location>
</feature>
<feature type="sequence conflict" description="In Ref. 2; CAA49816 and 3; BAA08982." evidence="3" ref="2 3">
    <original>P</original>
    <variation>A</variation>
    <location>
        <position position="540"/>
    </location>
</feature>
<feature type="sequence conflict" description="In Ref. 2; CAA49816 and 3; BAA08982." evidence="3" ref="2 3">
    <original>I</original>
    <variation>Y</variation>
    <location>
        <position position="562"/>
    </location>
</feature>
<feature type="sequence conflict" description="In Ref. 2; CAA49816 and 3; BAA08982." evidence="3" ref="2 3">
    <original>GS</original>
    <variation>PT</variation>
    <location>
        <begin position="639"/>
        <end position="640"/>
    </location>
</feature>
<feature type="sequence conflict" description="In Ref. 2; CAA49816 and 3; BAA08982." evidence="3" ref="2 3">
    <original>R</original>
    <variation>P</variation>
    <location>
        <position position="644"/>
    </location>
</feature>
<feature type="sequence conflict" description="In Ref. 2; CAA49816 and 3; BAA08982." evidence="3" ref="2 3">
    <original>LLA</original>
    <variation>FLP</variation>
    <location>
        <begin position="647"/>
        <end position="649"/>
    </location>
</feature>
<feature type="sequence conflict" description="In Ref. 2; CAA49816 and 3; BAA08982." evidence="3" ref="2 3">
    <original>L</original>
    <variation>Q</variation>
    <location>
        <position position="1026"/>
    </location>
</feature>
<feature type="sequence conflict" description="In Ref. 2; CAA49816 and 3; BAA08982." evidence="3" ref="2 3">
    <original>DS</original>
    <variation>VC</variation>
    <location>
        <begin position="1132"/>
        <end position="1133"/>
    </location>
</feature>
<feature type="sequence conflict" description="In Ref. 1; BAA02522." evidence="3" ref="1">
    <original>A</original>
    <variation>R</variation>
    <location>
        <position position="1164"/>
    </location>
</feature>
<feature type="sequence conflict" description="In Ref. 1; BAA02522." evidence="3" ref="1">
    <original>L</original>
    <variation>V</variation>
    <location>
        <position position="1458"/>
    </location>
</feature>
<feature type="sequence conflict" description="In Ref. 2; CAA49816 and 3; BAA08982." evidence="3" ref="2 3">
    <original>S</original>
    <variation>T</variation>
    <location>
        <position position="1850"/>
    </location>
</feature>
<feature type="sequence conflict" description="In Ref. 2; CAA49816 and 3; BAA08982." evidence="3" ref="2 3">
    <original>D</original>
    <variation>T</variation>
    <location>
        <position position="1894"/>
    </location>
</feature>
<feature type="sequence conflict" description="In Ref. 2; CAA49816 and 3; BAA08982." evidence="3" ref="2 3">
    <original>R</original>
    <variation>A</variation>
    <location>
        <position position="1911"/>
    </location>
</feature>
<feature type="sequence conflict" description="In Ref. 1; BAA02522." evidence="3" ref="1">
    <original>PAVFIQMD</original>
    <variation>LRCLSKWT</variation>
    <location>
        <begin position="1973"/>
        <end position="1980"/>
    </location>
</feature>
<feature type="sequence conflict" description="In Ref. 2; CAA49816 and 3; BAA08982." evidence="3" ref="2 3">
    <original>L</original>
    <variation>P</variation>
    <location>
        <position position="2052"/>
    </location>
</feature>
<feature type="sequence conflict" description="In Ref. 2; CAA49816 and 3; BAA08982." evidence="3" ref="2 3">
    <original>H</original>
    <variation>Q</variation>
    <location>
        <position position="2218"/>
    </location>
</feature>
<feature type="sequence conflict" description="In Ref. 2; CAA49816 and 3; BAA08982." evidence="3" ref="2 3">
    <original>QQ</original>
    <variation>HR</variation>
    <location>
        <begin position="2265"/>
        <end position="2266"/>
    </location>
</feature>
<feature type="sequence conflict" description="In Ref. 1; BAA02522." evidence="3" ref="1">
    <original>L</original>
    <variation>V</variation>
    <location>
        <position position="2291"/>
    </location>
</feature>
<feature type="sequence conflict" description="In Ref. 2; CAA49816 and 3; BAA08982." evidence="3" ref="2 3">
    <original>S</original>
    <variation>C</variation>
    <location>
        <position position="2349"/>
    </location>
</feature>
<feature type="sequence conflict" description="In Ref. 2; CAA49816 and 3; BAA08982." evidence="3" ref="2 3">
    <original>R</original>
    <variation>S</variation>
    <location>
        <position position="2428"/>
    </location>
</feature>
<feature type="sequence conflict" description="In Ref. 1; BAA02522." evidence="3" ref="1">
    <original>AV</original>
    <variation>RC</variation>
    <location>
        <begin position="2611"/>
        <end position="2612"/>
    </location>
</feature>
<feature type="sequence conflict" description="In Ref. 2; CAA49816 and 3; BAA08982." evidence="3" ref="2 3">
    <original>E</original>
    <variation>ENPE</variation>
    <location>
        <position position="2685"/>
    </location>
</feature>
<feature type="sequence conflict" description="In Ref. 2; CAA49816 and 3; BAA08982." evidence="3" ref="2 3">
    <original>T</original>
    <variation>S</variation>
    <location>
        <position position="2755"/>
    </location>
</feature>
<feature type="sequence conflict" description="In Ref. 1; BAA02522." evidence="3" ref="1">
    <original>TA</original>
    <variation>SP</variation>
    <location>
        <begin position="2896"/>
        <end position="2897"/>
    </location>
</feature>
<feature type="sequence conflict" description="In Ref. 2; CAA49816 and 3; BAA08982." evidence="3" ref="2 3">
    <original>P</original>
    <variation>N</variation>
    <location>
        <position position="3025"/>
    </location>
</feature>
<feature type="sequence conflict" description="In Ref. 2; CAA49816 and 3; BAA08982." evidence="3" ref="2 3">
    <original>F</original>
    <variation>N</variation>
    <location>
        <position position="3096"/>
    </location>
</feature>
<feature type="sequence conflict" description="In Ref. 2; CAA49816 and 3; BAA08982." evidence="3" ref="2 3">
    <original>A</original>
    <variation>S</variation>
    <location>
        <position position="3271"/>
    </location>
</feature>
<feature type="sequence conflict" description="In Ref. 2; CAA49816 and 3; BAA08982." evidence="3" ref="2 3">
    <original>R</original>
    <variation>S</variation>
    <location>
        <position position="3316"/>
    </location>
</feature>
<feature type="sequence conflict" description="In Ref. 2; CAA49816 and 3; BAA08982." evidence="3" ref="2 3">
    <original>Y</original>
    <variation>S</variation>
    <location>
        <position position="3451"/>
    </location>
</feature>
<feature type="sequence conflict" description="In Ref. 2; CAA49816 and 3; BAA08982." evidence="3" ref="2 3">
    <original>DEMSDAGLFTRSE</original>
    <variation>HQMSHPPFFTTSH</variation>
    <location>
        <begin position="3483"/>
        <end position="3495"/>
    </location>
</feature>
<feature type="sequence conflict" description="In Ref. 2; CAA49816 and 3; BAA08982." evidence="3" ref="2 3">
    <original>GQ</original>
    <variation>PH</variation>
    <location>
        <begin position="3499"/>
        <end position="3500"/>
    </location>
</feature>
<feature type="sequence conflict" description="In Ref. 1; BAA02522." evidence="3" ref="1">
    <original>E</original>
    <variation>R</variation>
    <location>
        <position position="3507"/>
    </location>
</feature>
<dbReference type="EMBL" id="D13262">
    <property type="protein sequence ID" value="BAA02522.1"/>
    <property type="molecule type" value="Genomic_DNA"/>
</dbReference>
<dbReference type="EMBL" id="X70356">
    <property type="protein sequence ID" value="CAA49816.1"/>
    <property type="status" value="ALT_FRAME"/>
    <property type="molecule type" value="Genomic_DNA"/>
</dbReference>
<dbReference type="EMBL" id="D50453">
    <property type="protein sequence ID" value="BAA08982.1"/>
    <property type="status" value="ALT_FRAME"/>
    <property type="molecule type" value="Genomic_DNA"/>
</dbReference>
<dbReference type="EMBL" id="AL009126">
    <property type="protein sequence ID" value="CAB12142.2"/>
    <property type="molecule type" value="Genomic_DNA"/>
</dbReference>
<dbReference type="EMBL" id="M59939">
    <property type="protein sequence ID" value="AAA22815.1"/>
    <property type="molecule type" value="Genomic_DNA"/>
</dbReference>
<dbReference type="EMBL" id="D30762">
    <property type="protein sequence ID" value="BAA21034.1"/>
    <property type="molecule type" value="Genomic_DNA"/>
</dbReference>
<dbReference type="EMBL" id="M64702">
    <property type="protein sequence ID" value="AAA22816.1"/>
    <property type="molecule type" value="Genomic_DNA"/>
</dbReference>
<dbReference type="PIR" id="I40485">
    <property type="entry name" value="I40485"/>
</dbReference>
<dbReference type="RefSeq" id="NP_388230.2">
    <property type="nucleotide sequence ID" value="NC_000964.3"/>
</dbReference>
<dbReference type="RefSeq" id="WP_010886402.1">
    <property type="nucleotide sequence ID" value="NZ_OZ025638.1"/>
</dbReference>
<dbReference type="SMR" id="P27206"/>
<dbReference type="FunCoup" id="P27206">
    <property type="interactions" value="80"/>
</dbReference>
<dbReference type="IntAct" id="P27206">
    <property type="interactions" value="4"/>
</dbReference>
<dbReference type="MINT" id="P27206"/>
<dbReference type="STRING" id="224308.BSU03480"/>
<dbReference type="jPOST" id="P27206"/>
<dbReference type="PaxDb" id="224308-BSU03480"/>
<dbReference type="EnsemblBacteria" id="CAB12142">
    <property type="protein sequence ID" value="CAB12142"/>
    <property type="gene ID" value="BSU_03480"/>
</dbReference>
<dbReference type="GeneID" id="938306"/>
<dbReference type="KEGG" id="bsu:BSU03480"/>
<dbReference type="PATRIC" id="fig|224308.179.peg.366"/>
<dbReference type="eggNOG" id="COG1020">
    <property type="taxonomic scope" value="Bacteria"/>
</dbReference>
<dbReference type="InParanoid" id="P27206"/>
<dbReference type="OrthoDB" id="9765680at2"/>
<dbReference type="PhylomeDB" id="P27206"/>
<dbReference type="BioCyc" id="BSUB:BSU03480-MONOMER"/>
<dbReference type="UniPathway" id="UPA00181"/>
<dbReference type="Proteomes" id="UP000001570">
    <property type="component" value="Chromosome"/>
</dbReference>
<dbReference type="GO" id="GO:0016874">
    <property type="term" value="F:ligase activity"/>
    <property type="evidence" value="ECO:0007669"/>
    <property type="project" value="UniProtKB-KW"/>
</dbReference>
<dbReference type="GO" id="GO:0031177">
    <property type="term" value="F:phosphopantetheine binding"/>
    <property type="evidence" value="ECO:0007669"/>
    <property type="project" value="InterPro"/>
</dbReference>
<dbReference type="GO" id="GO:0017000">
    <property type="term" value="P:antibiotic biosynthetic process"/>
    <property type="evidence" value="ECO:0007669"/>
    <property type="project" value="UniProtKB-KW"/>
</dbReference>
<dbReference type="GO" id="GO:0008610">
    <property type="term" value="P:lipid biosynthetic process"/>
    <property type="evidence" value="ECO:0007669"/>
    <property type="project" value="UniProtKB-ARBA"/>
</dbReference>
<dbReference type="GO" id="GO:0030435">
    <property type="term" value="P:sporulation resulting in formation of a cellular spore"/>
    <property type="evidence" value="ECO:0007669"/>
    <property type="project" value="UniProtKB-KW"/>
</dbReference>
<dbReference type="CDD" id="cd17655">
    <property type="entry name" value="A_NRPS_Bac"/>
    <property type="match status" value="1"/>
</dbReference>
<dbReference type="CDD" id="cd12117">
    <property type="entry name" value="A_NRPS_Srf_like"/>
    <property type="match status" value="1"/>
</dbReference>
<dbReference type="CDD" id="cd19534">
    <property type="entry name" value="E_NRPS"/>
    <property type="match status" value="1"/>
</dbReference>
<dbReference type="CDD" id="cd19531">
    <property type="entry name" value="LCL_NRPS-like"/>
    <property type="match status" value="2"/>
</dbReference>
<dbReference type="CDD" id="cd19533">
    <property type="entry name" value="starter-C_NRPS"/>
    <property type="match status" value="1"/>
</dbReference>
<dbReference type="FunFam" id="3.30.300.30:FF:000010">
    <property type="entry name" value="Enterobactin synthetase component F"/>
    <property type="match status" value="3"/>
</dbReference>
<dbReference type="FunFam" id="3.40.50.980:FF:000002">
    <property type="entry name" value="Enterobactin synthetase component F"/>
    <property type="match status" value="1"/>
</dbReference>
<dbReference type="FunFam" id="3.30.559.30:FF:000001">
    <property type="entry name" value="Non-ribosomal peptide synthetase"/>
    <property type="match status" value="1"/>
</dbReference>
<dbReference type="FunFam" id="3.40.50.12780:FF:000012">
    <property type="entry name" value="Non-ribosomal peptide synthetase"/>
    <property type="match status" value="3"/>
</dbReference>
<dbReference type="FunFam" id="3.40.50.980:FF:000001">
    <property type="entry name" value="Non-ribosomal peptide synthetase"/>
    <property type="match status" value="3"/>
</dbReference>
<dbReference type="FunFam" id="2.30.38.10:FF:000001">
    <property type="entry name" value="Non-ribosomal peptide synthetase PvdI"/>
    <property type="match status" value="2"/>
</dbReference>
<dbReference type="FunFam" id="1.10.1200.10:FF:000005">
    <property type="entry name" value="Nonribosomal peptide synthetase 1"/>
    <property type="match status" value="3"/>
</dbReference>
<dbReference type="Gene3D" id="3.30.300.30">
    <property type="match status" value="3"/>
</dbReference>
<dbReference type="Gene3D" id="3.40.50.980">
    <property type="match status" value="6"/>
</dbReference>
<dbReference type="Gene3D" id="1.10.1200.10">
    <property type="entry name" value="ACP-like"/>
    <property type="match status" value="2"/>
</dbReference>
<dbReference type="Gene3D" id="3.40.50.1820">
    <property type="entry name" value="alpha/beta hydrolase"/>
    <property type="match status" value="1"/>
</dbReference>
<dbReference type="Gene3D" id="3.30.559.10">
    <property type="entry name" value="Chloramphenicol acetyltransferase-like domain"/>
    <property type="match status" value="4"/>
</dbReference>
<dbReference type="Gene3D" id="2.30.38.10">
    <property type="entry name" value="Luciferase, Domain 3"/>
    <property type="match status" value="3"/>
</dbReference>
<dbReference type="Gene3D" id="3.30.559.30">
    <property type="entry name" value="Nonribosomal peptide synthetase, condensation domain"/>
    <property type="match status" value="4"/>
</dbReference>
<dbReference type="InterPro" id="IPR010071">
    <property type="entry name" value="AA_adenyl_dom"/>
</dbReference>
<dbReference type="InterPro" id="IPR029058">
    <property type="entry name" value="AB_hydrolase_fold"/>
</dbReference>
<dbReference type="InterPro" id="IPR036736">
    <property type="entry name" value="ACP-like_sf"/>
</dbReference>
<dbReference type="InterPro" id="IPR025110">
    <property type="entry name" value="AMP-bd_C"/>
</dbReference>
<dbReference type="InterPro" id="IPR045851">
    <property type="entry name" value="AMP-bd_C_sf"/>
</dbReference>
<dbReference type="InterPro" id="IPR020845">
    <property type="entry name" value="AMP-binding_CS"/>
</dbReference>
<dbReference type="InterPro" id="IPR000873">
    <property type="entry name" value="AMP-dep_synth/lig_dom"/>
</dbReference>
<dbReference type="InterPro" id="IPR023213">
    <property type="entry name" value="CAT-like_dom_sf"/>
</dbReference>
<dbReference type="InterPro" id="IPR001242">
    <property type="entry name" value="Condensatn"/>
</dbReference>
<dbReference type="InterPro" id="IPR010060">
    <property type="entry name" value="NRPS_synth"/>
</dbReference>
<dbReference type="InterPro" id="IPR020806">
    <property type="entry name" value="PKS_PP-bd"/>
</dbReference>
<dbReference type="InterPro" id="IPR009081">
    <property type="entry name" value="PP-bd_ACP"/>
</dbReference>
<dbReference type="InterPro" id="IPR006162">
    <property type="entry name" value="Ppantetheine_attach_site"/>
</dbReference>
<dbReference type="NCBIfam" id="TIGR01733">
    <property type="entry name" value="AA-adenyl-dom"/>
    <property type="match status" value="3"/>
</dbReference>
<dbReference type="NCBIfam" id="TIGR01720">
    <property type="entry name" value="NRPS-para261"/>
    <property type="match status" value="1"/>
</dbReference>
<dbReference type="NCBIfam" id="NF003417">
    <property type="entry name" value="PRK04813.1"/>
    <property type="match status" value="3"/>
</dbReference>
<dbReference type="PANTHER" id="PTHR45527:SF1">
    <property type="entry name" value="FATTY ACID SYNTHASE"/>
    <property type="match status" value="1"/>
</dbReference>
<dbReference type="PANTHER" id="PTHR45527">
    <property type="entry name" value="NONRIBOSOMAL PEPTIDE SYNTHETASE"/>
    <property type="match status" value="1"/>
</dbReference>
<dbReference type="Pfam" id="PF00501">
    <property type="entry name" value="AMP-binding"/>
    <property type="match status" value="3"/>
</dbReference>
<dbReference type="Pfam" id="PF13193">
    <property type="entry name" value="AMP-binding_C"/>
    <property type="match status" value="3"/>
</dbReference>
<dbReference type="Pfam" id="PF00668">
    <property type="entry name" value="Condensation"/>
    <property type="match status" value="4"/>
</dbReference>
<dbReference type="Pfam" id="PF00550">
    <property type="entry name" value="PP-binding"/>
    <property type="match status" value="3"/>
</dbReference>
<dbReference type="SMART" id="SM00823">
    <property type="entry name" value="PKS_PP"/>
    <property type="match status" value="3"/>
</dbReference>
<dbReference type="SMART" id="SM01294">
    <property type="entry name" value="PKS_PP_betabranch"/>
    <property type="match status" value="1"/>
</dbReference>
<dbReference type="SUPFAM" id="SSF56801">
    <property type="entry name" value="Acetyl-CoA synthetase-like"/>
    <property type="match status" value="3"/>
</dbReference>
<dbReference type="SUPFAM" id="SSF47336">
    <property type="entry name" value="ACP-like"/>
    <property type="match status" value="3"/>
</dbReference>
<dbReference type="SUPFAM" id="SSF52777">
    <property type="entry name" value="CoA-dependent acyltransferases"/>
    <property type="match status" value="8"/>
</dbReference>
<dbReference type="PROSITE" id="PS00455">
    <property type="entry name" value="AMP_BINDING"/>
    <property type="match status" value="3"/>
</dbReference>
<dbReference type="PROSITE" id="PS50075">
    <property type="entry name" value="CARRIER"/>
    <property type="match status" value="3"/>
</dbReference>
<dbReference type="PROSITE" id="PS00012">
    <property type="entry name" value="PHOSPHOPANTETHEINE"/>
    <property type="match status" value="3"/>
</dbReference>
<sequence length="3587" mass="402146">MEITFYPLTDAQKRIWYTEKFYPHTSISNLAGIGKLVSADAIDYVLVEQAIQEFIRRNDAMRLRLRLDENGEPVQYISEYRPVDIKHTDTTEDPNAIEFISQWSREETKKPLPLYDCDLFRFSLFTIKENEVWFYANVHHVISDGISMNILGNAIMHIYLELASGSETKEGISHSFIDHVLSEQEYAQSKRFEKDKAFWNKQFESVPELVSLKRNASAGGSLDAERFSKDVPEALHQQILSFCEANKVSVLSVFQSLLAAYLYRVSGQNDVVTGTFMGNRTNAKEKQMLGMFVSTVPLRTNIDGGQAFSEFVKDRMKDLMKTLRHQKYPYNLLINDLRETKSSLTKLFTVSLEYQVMQWQKEEDLAFLTEPIFSGSGLNDVSIHVKDRWDTGKLTIDFDYRTDLFSREEINMICERMITMLENALTHPEHTIDELTLISDAEKEKLLARAGGKSVSYRKDMTIPELFQEKAELLSDHPAVVFEDRTLSYRTLHEQSARIANVLKQKGVGPDSPVAVLIERSERMITAIMGILKAGGAYVPIDPGFPAERIQYILEDCGADFILTESKVAAPEADAELIDLDQAIEEGAEESLNADVNARNLAYIIYTSGTTGRPKGVMIEHRQVHHLVESLQQTIYQSGSQTLRMALLAPFHFDASVKQIFASLLLGQTLYIVPKKTVTNGAALTAYYRKNSIEATDGTPAHLQMLAAAGDFEGLKLKHMLIGGEGLSSVVADKLLKLFKEAGTAPRLTNVYGPTETCVDASVHPVIPENAVQSAYVPIGKALGNNRLYILDQKGRLQPEGVAGELYIAGDGVGRGYLHLPELTEEKFLQDPFVPGDRMYRTGDVVRWLPDGTIEYLGREDDQVKVRGYRIELGEIEAVIQQAPDVAKAVVLARPDEQGNLEVCAYVVQKPGSEFAPAGLREHAARQLPDYMVPAYFTEVTEIPLTPSGKVDRRKLFALEVKAVSGTAYTAPRNETEKAIAAIWQDVLNVEKAGIFDNFFETGGHSLKAMTLLTKIHKETGIEIPLQFLFEHPTITALAEEADHRESKAFAVIEPAEKQEHYPLSLAQQRTYIVSQFEDAGVGYNMPAAAILEGPLDIQKLERAFQGLIRRHESLRTSFVLENSTPRQKIHDSVDFNIEMIERGGRSDEAIMASFVRTFDLAKAPLFRIGLLGLEENRHMLLFDMHHLISDGVSIGIMLEELARIYKGEQLPDLRLQYKDYAVWQSRQAAEGYKKDQAYWKEVFAGELPVLQLLSDYPRPPVQSFEGDRVSIKLDAGVKDRLNRLAEQNGATLYMVMLSAYYTLLSKYTGQDDIIVGTPSAGRNHSDTEGIIGMFVNTLAIRSEVKQNETFTQLISRVRKRVLDAFSHQDYPFEWLVEDLNIPRDVSRHPLFDTMFSLQNATEGIPAVGDLSLSVQETNFKIAKFDLTVQARETDEGIEIDVDYSTKLFKQSTADRLLTHFARLLEDAAADPEKPISEYKLLSEEEAASQIQQFNPGRTPYPKDKTIVQLFEEQAANTPDHTALQYEGESLTYRELNERANRLARGILSLGAGEGRTAAVLCERSMDMIVSILAVLKSGSAYVPIDPEHPIQRMQHFFRDSGAKVLLTQRKLKALAEEAEFKGVIVLADEEESYHADARNLALPLDSAAMANLTYTSGTTGTPKGNIVTHANILRTVKETNYLSITEQDTILGLSNYVFDAFMFDMFGSLLNGAKLVLIPKETVLDMARLSRVIERENISILMITTALFHLLVDLNPACLSTLRKIMFGGERASVEHVRKALQTVGKGKLLHMYGPSESTVFATYHPVDELEEHTLSVPIGKPVSNTEVYILDRTGHVQPAGIAGELCVSGEGLVKGYYNRPELTEEKFVPHPFTSGERMYKTGDLARWLPNGDIEFIGRIDHQVKIRGQRIELGEIEHQLQTHDRVQESVVLAVDQGAGDKLLCAYYVGEGDISSQEMREHAAKDLPAYMVPAVFIQMDELPLTGNGKIDRRALPIPDANVSRGVSYVAPRNGTEQKVADIWAQVLQAEQVGAYDHFFDIGGHSLAGMKMLALVHQELGVELSLKDLFQSPTVEGLAQVIASAEKGTAASISPAEKQDTYPVSSPQKRMYVLQQLEDAQTSYNMPAVLRLTGELDVERLNSVMQQLMQRHEALRTTFEIKDGETVQRIWEEAECEIAYFEAPEEETERIVSEFIKPFKIDQLPLFRIGLIKHSDTEHVLLFDMHHIISDGASVGVLIEELSKLYDGETLEPLRIQYKDYAVWQQQFIQSELYKKQEEHWLKELDGELPVLTLPTDYSRPAVQTFEGDRIAFSLEAGKADALRRLAKETDSTLYMVLLASYSAFLSKISGQDDIIVGSPVAGRSQADVSRVIGMFVNTLALRTYPKGEKTFADYLNEVKETALSAFDAQDYPLEDLIGNVQVQRDTSRNPLFDAVFSMQNANIKDLTMKGIQLEPHPFERKTAKFDLTLTADETDGGLTFVLEYNTALFKQETIERWKQYWMELLDAVTGNPNQPLSSLSLVTETEKQALLEAWKGKALPVPTDKTVHQLFEETAQRHKDRPAVTYNGQSWTYGELNAKANRLARILMDCGISPDDRVGVLTKPSLEMSAAVLGVLKAGAAFVPIDPDYPDQRIEYILQDSGAKLLLKQEGISVPDSYTGDVILLDGSRTILSLPLDENDEENPETAVTAENLAYMIYTSGTTGQPKGVMVEHHALVNLCFWHHDAFSMTAEDRSAKYAGFGFDASIWEMFPTWTIGAELHVIEEAIRLDIVRLNDYFETNGVTITFLPTQLAEQFMELENTSLRVLLTGGDKLKRAVKKPYTLVNNYGPTENTVVATSAEIHPEEGSLSIGRAIANTRVYILGEGNQVQPEGVAGELCVAGRGLARGYLNREDETAKRFVADPFVPGERMYRTGDLVKWTGGGIEYIGRIDQQVKVRGYRIELSEIEVQLAQLSEVQDAAVTAVKDKGGNTAIAAYVTPESADIEALKSALKETLPDYMIPAFWVTLNELPVTANGKVDRKALPEPDIEAGSGEYKAPTTDMEELLAGIWQDVLGMSEVGVTDNFFSLGGDSIKGIQMASRLNQHGWKLEMKDLFQHPTIEELTQYVERAEGKQADQGPVEGEVILTPIQRWFFEKNFTNKHHWNQSVMLHAKKGFDPERVEKTLQALIEHHDALRMVYREGQEDVIQYNRGLEAASAQLEVIQIEGQAADYEDRIEREAERLQSSIDLQEGGLLKAGLFQAEDGDHLLLAIHHLVVDGVSWRILLEDFAAVYTQLEQGNEPVLPQKTHSFAEYAERLQDFANSKAFLKEKEYWRQLEEQAVAAKLPKDRESGDQRMKHTKTIEFSLTAEETEQLTTKVHEAYHTEMNDILLTAFGLAMKEWTGQDRVSVHLEGHGREEIIEDLTISRTVGWFTSMYPMVLDMKHADDLGYQLKQMKEDIRHVPNKGVGYGILRYLTAPEHKEDVAFSIQPDVSFNYLGQFDEMSDAGLFTRSELPSGQSLSPETEKPNALDVVGYIENGKLTMSLAYHSLEFHEKTVQTFSDSFKAHLLRIIEHCLSQDGTELTPSDLGDDDLTLDELDKLMEIF</sequence>
<protein>
    <recommendedName>
        <fullName>Surfactin synthase subunit 1</fullName>
    </recommendedName>
</protein>
<proteinExistence type="evidence at protein level"/>
<name>SRFAA_BACSU</name>
<accession>P27206</accession>
<comment type="function">
    <text>This protein is a multifunctional enzyme able to activate and polymerize the amino acids Leu, Glu, Asp and Val. Activation sites for these AA consist of individual domains.</text>
</comment>
<comment type="cofactor">
    <cofactor>
        <name>pantetheine 4'-phosphate</name>
        <dbReference type="ChEBI" id="CHEBI:47942"/>
    </cofactor>
    <text>Binds 3 phosphopantetheines covalently.</text>
</comment>
<comment type="pathway">
    <text>Antibiotic biosynthesis; surfactin biosynthesis.</text>
</comment>
<comment type="similarity">
    <text evidence="3">Belongs to the ATP-dependent AMP-binding enzyme family.</text>
</comment>
<comment type="caution">
    <text evidence="3">The phosphoserine observed at Ser-1006 in PubMed:17218307 undoubtedly results from the secondary neutral loss of pantetheine from the phosphodiester linked cofactor.</text>
</comment>
<comment type="sequence caution" evidence="3">
    <conflict type="frameshift">
        <sequence resource="EMBL-CDS" id="BAA08982"/>
    </conflict>
</comment>
<comment type="sequence caution" evidence="3">
    <conflict type="frameshift">
        <sequence resource="EMBL-CDS" id="CAA49816"/>
    </conflict>
</comment>
<keyword id="KW-0045">Antibiotic biosynthesis</keyword>
<keyword id="KW-0436">Ligase</keyword>
<keyword id="KW-0511">Multifunctional enzyme</keyword>
<keyword id="KW-0596">Phosphopantetheine</keyword>
<keyword id="KW-0597">Phosphoprotein</keyword>
<keyword id="KW-1185">Reference proteome</keyword>
<keyword id="KW-0677">Repeat</keyword>
<keyword id="KW-0749">Sporulation</keyword>
<evidence type="ECO:0000255" key="1">
    <source>
        <dbReference type="PROSITE-ProRule" id="PRU00258"/>
    </source>
</evidence>
<evidence type="ECO:0000269" key="2">
    <source>
    </source>
</evidence>
<evidence type="ECO:0000305" key="3"/>
<gene>
    <name type="primary">srfAA</name>
    <name type="synonym">srfA</name>
    <name type="synonym">srfA1</name>
    <name type="ordered locus">BSU03480</name>
</gene>
<reference key="1">
    <citation type="journal article" date="1993" name="Nucleic Acids Res.">
        <title>Nucleotide sequence of 5' portion of srfA that contains the region required for competence establishment in Bacillus subtilis.</title>
        <authorList>
            <person name="Fuma S."/>
            <person name="Fujishima Y."/>
            <person name="Corbell N."/>
            <person name="D'Souza C."/>
            <person name="Nakano M.M."/>
            <person name="Zuber P."/>
            <person name="Yamane K."/>
        </authorList>
    </citation>
    <scope>NUCLEOTIDE SEQUENCE [GENOMIC DNA]</scope>
    <source>
        <strain>168</strain>
    </source>
</reference>
<reference key="2">
    <citation type="journal article" date="1993" name="Mol. Microbiol.">
        <title>Sequence and analysis of the genetic locus responsible for surfactin synthesis in Bacillus subtilis.</title>
        <authorList>
            <person name="Cosmina P."/>
            <person name="Rodriguez F."/>
            <person name="de Ferra F."/>
            <person name="Grandi G."/>
            <person name="Perego M."/>
            <person name="Venema G."/>
            <person name="van Sinderen D."/>
        </authorList>
    </citation>
    <scope>NUCLEOTIDE SEQUENCE [GENOMIC DNA]</scope>
    <source>
        <strain>168 / JH642</strain>
    </source>
</reference>
<reference key="3">
    <citation type="journal article" date="1996" name="Microbiology">
        <title>The 25 degrees-36 degrees region of the Bacillus subtilis chromosome: determination of the sequence of a 146 kb segment and identification of 113 genes.</title>
        <authorList>
            <person name="Yamane K."/>
            <person name="Kumano M."/>
            <person name="Kurita K."/>
        </authorList>
    </citation>
    <scope>NUCLEOTIDE SEQUENCE [GENOMIC DNA]</scope>
    <source>
        <strain>168</strain>
    </source>
</reference>
<reference key="4">
    <citation type="journal article" date="1997" name="Nature">
        <title>The complete genome sequence of the Gram-positive bacterium Bacillus subtilis.</title>
        <authorList>
            <person name="Kunst F."/>
            <person name="Ogasawara N."/>
            <person name="Moszer I."/>
            <person name="Albertini A.M."/>
            <person name="Alloni G."/>
            <person name="Azevedo V."/>
            <person name="Bertero M.G."/>
            <person name="Bessieres P."/>
            <person name="Bolotin A."/>
            <person name="Borchert S."/>
            <person name="Borriss R."/>
            <person name="Boursier L."/>
            <person name="Brans A."/>
            <person name="Braun M."/>
            <person name="Brignell S.C."/>
            <person name="Bron S."/>
            <person name="Brouillet S."/>
            <person name="Bruschi C.V."/>
            <person name="Caldwell B."/>
            <person name="Capuano V."/>
            <person name="Carter N.M."/>
            <person name="Choi S.-K."/>
            <person name="Codani J.-J."/>
            <person name="Connerton I.F."/>
            <person name="Cummings N.J."/>
            <person name="Daniel R.A."/>
            <person name="Denizot F."/>
            <person name="Devine K.M."/>
            <person name="Duesterhoeft A."/>
            <person name="Ehrlich S.D."/>
            <person name="Emmerson P.T."/>
            <person name="Entian K.-D."/>
            <person name="Errington J."/>
            <person name="Fabret C."/>
            <person name="Ferrari E."/>
            <person name="Foulger D."/>
            <person name="Fritz C."/>
            <person name="Fujita M."/>
            <person name="Fujita Y."/>
            <person name="Fuma S."/>
            <person name="Galizzi A."/>
            <person name="Galleron N."/>
            <person name="Ghim S.-Y."/>
            <person name="Glaser P."/>
            <person name="Goffeau A."/>
            <person name="Golightly E.J."/>
            <person name="Grandi G."/>
            <person name="Guiseppi G."/>
            <person name="Guy B.J."/>
            <person name="Haga K."/>
            <person name="Haiech J."/>
            <person name="Harwood C.R."/>
            <person name="Henaut A."/>
            <person name="Hilbert H."/>
            <person name="Holsappel S."/>
            <person name="Hosono S."/>
            <person name="Hullo M.-F."/>
            <person name="Itaya M."/>
            <person name="Jones L.-M."/>
            <person name="Joris B."/>
            <person name="Karamata D."/>
            <person name="Kasahara Y."/>
            <person name="Klaerr-Blanchard M."/>
            <person name="Klein C."/>
            <person name="Kobayashi Y."/>
            <person name="Koetter P."/>
            <person name="Koningstein G."/>
            <person name="Krogh S."/>
            <person name="Kumano M."/>
            <person name="Kurita K."/>
            <person name="Lapidus A."/>
            <person name="Lardinois S."/>
            <person name="Lauber J."/>
            <person name="Lazarevic V."/>
            <person name="Lee S.-M."/>
            <person name="Levine A."/>
            <person name="Liu H."/>
            <person name="Masuda S."/>
            <person name="Mauel C."/>
            <person name="Medigue C."/>
            <person name="Medina N."/>
            <person name="Mellado R.P."/>
            <person name="Mizuno M."/>
            <person name="Moestl D."/>
            <person name="Nakai S."/>
            <person name="Noback M."/>
            <person name="Noone D."/>
            <person name="O'Reilly M."/>
            <person name="Ogawa K."/>
            <person name="Ogiwara A."/>
            <person name="Oudega B."/>
            <person name="Park S.-H."/>
            <person name="Parro V."/>
            <person name="Pohl T.M."/>
            <person name="Portetelle D."/>
            <person name="Porwollik S."/>
            <person name="Prescott A.M."/>
            <person name="Presecan E."/>
            <person name="Pujic P."/>
            <person name="Purnelle B."/>
            <person name="Rapoport G."/>
            <person name="Rey M."/>
            <person name="Reynolds S."/>
            <person name="Rieger M."/>
            <person name="Rivolta C."/>
            <person name="Rocha E."/>
            <person name="Roche B."/>
            <person name="Rose M."/>
            <person name="Sadaie Y."/>
            <person name="Sato T."/>
            <person name="Scanlan E."/>
            <person name="Schleich S."/>
            <person name="Schroeter R."/>
            <person name="Scoffone F."/>
            <person name="Sekiguchi J."/>
            <person name="Sekowska A."/>
            <person name="Seror S.J."/>
            <person name="Serror P."/>
            <person name="Shin B.-S."/>
            <person name="Soldo B."/>
            <person name="Sorokin A."/>
            <person name="Tacconi E."/>
            <person name="Takagi T."/>
            <person name="Takahashi H."/>
            <person name="Takemaru K."/>
            <person name="Takeuchi M."/>
            <person name="Tamakoshi A."/>
            <person name="Tanaka T."/>
            <person name="Terpstra P."/>
            <person name="Tognoni A."/>
            <person name="Tosato V."/>
            <person name="Uchiyama S."/>
            <person name="Vandenbol M."/>
            <person name="Vannier F."/>
            <person name="Vassarotti A."/>
            <person name="Viari A."/>
            <person name="Wambutt R."/>
            <person name="Wedler E."/>
            <person name="Wedler H."/>
            <person name="Weitzenegger T."/>
            <person name="Winters P."/>
            <person name="Wipat A."/>
            <person name="Yamamoto H."/>
            <person name="Yamane K."/>
            <person name="Yasumoto K."/>
            <person name="Yata K."/>
            <person name="Yoshida K."/>
            <person name="Yoshikawa H.-F."/>
            <person name="Zumstein E."/>
            <person name="Yoshikawa H."/>
            <person name="Danchin A."/>
        </authorList>
    </citation>
    <scope>NUCLEOTIDE SEQUENCE [LARGE SCALE GENOMIC DNA]</scope>
    <source>
        <strain>168</strain>
    </source>
</reference>
<reference key="5">
    <citation type="journal article" date="2009" name="Microbiology">
        <title>From a consortium sequence to a unified sequence: the Bacillus subtilis 168 reference genome a decade later.</title>
        <authorList>
            <person name="Barbe V."/>
            <person name="Cruveiller S."/>
            <person name="Kunst F."/>
            <person name="Lenoble P."/>
            <person name="Meurice G."/>
            <person name="Sekowska A."/>
            <person name="Vallenet D."/>
            <person name="Wang T."/>
            <person name="Moszer I."/>
            <person name="Medigue C."/>
            <person name="Danchin A."/>
        </authorList>
    </citation>
    <scope>SEQUENCE REVISION</scope>
</reference>
<reference key="6">
    <citation type="journal article" date="1991" name="J. Bacteriol.">
        <title>srfA is an operon required for surfactin production, competence development, and efficient sporulation in Bacillus subtilis.</title>
        <authorList>
            <person name="Nakano M.M."/>
            <person name="Magnuson R."/>
            <person name="Myers A.M."/>
            <person name="Curry J."/>
            <person name="Grossman A.D."/>
            <person name="Zuber P."/>
        </authorList>
    </citation>
    <scope>NUCLEOTIDE SEQUENCE [GENOMIC DNA] OF 1-460</scope>
</reference>
<reference key="7">
    <citation type="journal article" date="1995" name="Microbiology">
        <title>A 10 kb nucleotide sequence at the 5' flanking region (32 degrees) of srfAA of the Bacillus subtilis chromosome.</title>
        <authorList>
            <person name="Fujishima Y."/>
            <person name="Yamane K."/>
        </authorList>
    </citation>
    <scope>NUCLEOTIDE SEQUENCE [GENOMIC DNA] OF 1-64</scope>
    <source>
        <strain>168</strain>
    </source>
</reference>
<reference key="8">
    <citation type="journal article" date="1991" name="J. Bacteriol.">
        <title>Transcription initiation region of the srfA operon, which is controlled by the comP-comA signal transduction system in Bacillus subtilis.</title>
        <authorList>
            <person name="Nakano M.M."/>
            <person name="Xia L."/>
            <person name="Zuber P."/>
        </authorList>
    </citation>
    <scope>NUCLEOTIDE SEQUENCE [GENOMIC DNA] OF 1-38</scope>
</reference>
<reference key="9">
    <citation type="journal article" date="2007" name="Mol. Cell. Proteomics">
        <title>The serine/threonine/tyrosine phosphoproteome of the model bacterium Bacillus subtilis.</title>
        <authorList>
            <person name="Macek B."/>
            <person name="Mijakovic I."/>
            <person name="Olsen J.V."/>
            <person name="Gnad F."/>
            <person name="Kumar C."/>
            <person name="Jensen P.R."/>
            <person name="Mann M."/>
        </authorList>
    </citation>
    <scope>PHOSPHOPANTETHEINYLATION [LARGE SCALE ANALYSIS] AT SER-1006</scope>
    <scope>IDENTIFICATION BY MASS SPECTROMETRY</scope>
    <source>
        <strain>168</strain>
    </source>
</reference>
<organism>
    <name type="scientific">Bacillus subtilis (strain 168)</name>
    <dbReference type="NCBI Taxonomy" id="224308"/>
    <lineage>
        <taxon>Bacteria</taxon>
        <taxon>Bacillati</taxon>
        <taxon>Bacillota</taxon>
        <taxon>Bacilli</taxon>
        <taxon>Bacillales</taxon>
        <taxon>Bacillaceae</taxon>
        <taxon>Bacillus</taxon>
    </lineage>
</organism>